<organism>
    <name type="scientific">Bos taurus</name>
    <name type="common">Bovine</name>
    <dbReference type="NCBI Taxonomy" id="9913"/>
    <lineage>
        <taxon>Eukaryota</taxon>
        <taxon>Metazoa</taxon>
        <taxon>Chordata</taxon>
        <taxon>Craniata</taxon>
        <taxon>Vertebrata</taxon>
        <taxon>Euteleostomi</taxon>
        <taxon>Mammalia</taxon>
        <taxon>Eutheria</taxon>
        <taxon>Laurasiatheria</taxon>
        <taxon>Artiodactyla</taxon>
        <taxon>Ruminantia</taxon>
        <taxon>Pecora</taxon>
        <taxon>Bovidae</taxon>
        <taxon>Bovinae</taxon>
        <taxon>Bos</taxon>
    </lineage>
</organism>
<evidence type="ECO:0000250" key="1"/>
<evidence type="ECO:0000255" key="2">
    <source>
        <dbReference type="PROSITE-ProRule" id="PRU10017"/>
    </source>
</evidence>
<evidence type="ECO:0000305" key="3"/>
<name>MGMT_BOVIN</name>
<accession>P29177</accession>
<feature type="chain" id="PRO_0000139356" description="Methylated-DNA--protein-cysteine methyltransferase">
    <location>
        <begin position="1" status="less than"/>
        <end position="9" status="greater than"/>
    </location>
</feature>
<feature type="active site" description="Nucleophile; methyl group acceptor" evidence="2">
    <location>
        <position position="9"/>
    </location>
</feature>
<feature type="non-terminal residue">
    <location>
        <position position="1"/>
    </location>
</feature>
<feature type="non-terminal residue">
    <location>
        <position position="9"/>
    </location>
</feature>
<proteinExistence type="evidence at protein level"/>
<protein>
    <recommendedName>
        <fullName>Methylated-DNA--protein-cysteine methyltransferase</fullName>
        <ecNumber>2.1.1.63</ecNumber>
    </recommendedName>
    <alternativeName>
        <fullName>6-O-methylguanine-DNA methyltransferase</fullName>
        <shortName>MGMT</shortName>
    </alternativeName>
    <alternativeName>
        <fullName>O-6-methylguanine-DNA-alkyltransferase</fullName>
    </alternativeName>
</protein>
<dbReference type="EC" id="2.1.1.63"/>
<dbReference type="InParanoid" id="P29177"/>
<dbReference type="OrthoDB" id="1907495at2759"/>
<dbReference type="Proteomes" id="UP000009136">
    <property type="component" value="Unplaced"/>
</dbReference>
<dbReference type="GO" id="GO:0005634">
    <property type="term" value="C:nucleus"/>
    <property type="evidence" value="ECO:0007669"/>
    <property type="project" value="UniProtKB-SubCell"/>
</dbReference>
<dbReference type="GO" id="GO:0003677">
    <property type="term" value="F:DNA binding"/>
    <property type="evidence" value="ECO:0007669"/>
    <property type="project" value="UniProtKB-KW"/>
</dbReference>
<dbReference type="GO" id="GO:0046872">
    <property type="term" value="F:metal ion binding"/>
    <property type="evidence" value="ECO:0007669"/>
    <property type="project" value="UniProtKB-KW"/>
</dbReference>
<dbReference type="GO" id="GO:0003908">
    <property type="term" value="F:methylated-DNA-[protein]-cysteine S-methyltransferase activity"/>
    <property type="evidence" value="ECO:0007669"/>
    <property type="project" value="UniProtKB-EC"/>
</dbReference>
<dbReference type="GO" id="GO:0006281">
    <property type="term" value="P:DNA repair"/>
    <property type="evidence" value="ECO:0007669"/>
    <property type="project" value="UniProtKB-KW"/>
</dbReference>
<dbReference type="GO" id="GO:0032259">
    <property type="term" value="P:methylation"/>
    <property type="evidence" value="ECO:0007669"/>
    <property type="project" value="UniProtKB-KW"/>
</dbReference>
<keyword id="KW-0903">Direct protein sequencing</keyword>
<keyword id="KW-0227">DNA damage</keyword>
<keyword id="KW-0234">DNA repair</keyword>
<keyword id="KW-0238">DNA-binding</keyword>
<keyword id="KW-0479">Metal-binding</keyword>
<keyword id="KW-0489">Methyltransferase</keyword>
<keyword id="KW-0539">Nucleus</keyword>
<keyword id="KW-1185">Reference proteome</keyword>
<keyword id="KW-0808">Transferase</keyword>
<keyword id="KW-0862">Zinc</keyword>
<gene>
    <name type="primary">MGMT</name>
</gene>
<comment type="function">
    <text>Involved in the cellular defense against the biological effects of O6-methylguanine (O6-MeG) and O4-methylthymine (O4-MeT) in DNA. Repairs the methylated nucleobase in DNA by stoichiometrically transferring the methyl group to a cysteine residue in the enzyme. This is a suicide reaction: the enzyme is irreversibly inactivated.</text>
</comment>
<comment type="catalytic activity">
    <reaction evidence="2">
        <text>a 6-O-methyl-2'-deoxyguanosine in DNA + L-cysteinyl-[protein] = S-methyl-L-cysteinyl-[protein] + a 2'-deoxyguanosine in DNA</text>
        <dbReference type="Rhea" id="RHEA:24000"/>
        <dbReference type="Rhea" id="RHEA-COMP:10131"/>
        <dbReference type="Rhea" id="RHEA-COMP:10132"/>
        <dbReference type="Rhea" id="RHEA-COMP:11367"/>
        <dbReference type="Rhea" id="RHEA-COMP:11368"/>
        <dbReference type="ChEBI" id="CHEBI:29950"/>
        <dbReference type="ChEBI" id="CHEBI:82612"/>
        <dbReference type="ChEBI" id="CHEBI:85445"/>
        <dbReference type="ChEBI" id="CHEBI:85448"/>
        <dbReference type="EC" id="2.1.1.63"/>
    </reaction>
</comment>
<comment type="catalytic activity">
    <reaction evidence="2">
        <text>a 4-O-methyl-thymidine in DNA + L-cysteinyl-[protein] = a thymidine in DNA + S-methyl-L-cysteinyl-[protein]</text>
        <dbReference type="Rhea" id="RHEA:53428"/>
        <dbReference type="Rhea" id="RHEA-COMP:10131"/>
        <dbReference type="Rhea" id="RHEA-COMP:10132"/>
        <dbReference type="Rhea" id="RHEA-COMP:13555"/>
        <dbReference type="Rhea" id="RHEA-COMP:13556"/>
        <dbReference type="ChEBI" id="CHEBI:29950"/>
        <dbReference type="ChEBI" id="CHEBI:82612"/>
        <dbReference type="ChEBI" id="CHEBI:137386"/>
        <dbReference type="ChEBI" id="CHEBI:137387"/>
        <dbReference type="EC" id="2.1.1.63"/>
    </reaction>
</comment>
<comment type="cofactor">
    <cofactor evidence="1">
        <name>Zn(2+)</name>
        <dbReference type="ChEBI" id="CHEBI:29105"/>
    </cofactor>
    <text evidence="1">Binds 1 zinc ion.</text>
</comment>
<comment type="subcellular location">
    <subcellularLocation>
        <location evidence="3">Nucleus</location>
    </subcellularLocation>
</comment>
<comment type="miscellaneous">
    <text>This enzyme catalyzes only one turnover and therefore is not strictly catalytic. According to one definition, an enzyme is a biocatalyst that acts repeatedly and over many reaction cycles.</text>
</comment>
<comment type="similarity">
    <text evidence="3">Belongs to the MGMT family.</text>
</comment>
<reference key="1">
    <citation type="journal article" date="1990" name="Nucleic Acids Res.">
        <title>Active site amino acid sequence of the bovine O6-methylguanine-DNA methyltransferase.</title>
        <authorList>
            <person name="Rydberg B."/>
            <person name="Hall J."/>
            <person name="Karran P."/>
        </authorList>
    </citation>
    <scope>PROTEIN SEQUENCE</scope>
    <source>
        <tissue>Thymus</tissue>
    </source>
</reference>
<sequence length="9" mass="967">NPIPILTPC</sequence>